<comment type="function">
    <text evidence="1">Cell wall formation.</text>
</comment>
<comment type="catalytic activity">
    <reaction evidence="1">
        <text>UDP-N-acetyl-alpha-D-muramate + NADP(+) = UDP-N-acetyl-3-O-(1-carboxyvinyl)-alpha-D-glucosamine + NADPH + H(+)</text>
        <dbReference type="Rhea" id="RHEA:12248"/>
        <dbReference type="ChEBI" id="CHEBI:15378"/>
        <dbReference type="ChEBI" id="CHEBI:57783"/>
        <dbReference type="ChEBI" id="CHEBI:58349"/>
        <dbReference type="ChEBI" id="CHEBI:68483"/>
        <dbReference type="ChEBI" id="CHEBI:70757"/>
        <dbReference type="EC" id="1.3.1.98"/>
    </reaction>
</comment>
<comment type="cofactor">
    <cofactor evidence="1">
        <name>FAD</name>
        <dbReference type="ChEBI" id="CHEBI:57692"/>
    </cofactor>
</comment>
<comment type="pathway">
    <text evidence="1">Cell wall biogenesis; peptidoglycan biosynthesis.</text>
</comment>
<comment type="subcellular location">
    <subcellularLocation>
        <location evidence="1">Cytoplasm</location>
    </subcellularLocation>
</comment>
<comment type="similarity">
    <text evidence="1">Belongs to the MurB family.</text>
</comment>
<name>MURB_MYCBT</name>
<accession>C1AKG0</accession>
<sequence length="369" mass="38521">MKRSGVGSLFAGAHIAEAVPLAPLTTLRVGPIARRVITCTSAEQVVAALRHLDSAAKTGADRPLVFAGGSNLVIAENLTDLTVVRLANSGITIDGNLVRAEAGAVFDDVVVRAIEQGLGGLECLSGIPGSAGATPVQNVGAYGAEVSDTITRVRLLDRCTGEVRWVSARDLRFGYRTSVLKHADGLAVPTVVLEVEFALDPSGRSAPLRYGELIAALNATSGERADPQAVREAVLALRARKGMVLDPTDHDTWSVGSFFTNPVVTQDVYERLAGDAATRKDGPVPHYPAPDGVKLAAGWLVERAGFGKGYPDAGAAPCRLSTKHALALTNRGGATAEDVVTLARAVRDGVHDVFGITLKPEPVLIGCML</sequence>
<reference key="1">
    <citation type="journal article" date="2009" name="Vaccine">
        <title>Whole genome sequence analysis of Mycobacterium bovis bacillus Calmette-Guerin (BCG) Tokyo 172: a comparative study of BCG vaccine substrains.</title>
        <authorList>
            <person name="Seki M."/>
            <person name="Honda I."/>
            <person name="Fujita I."/>
            <person name="Yano I."/>
            <person name="Yamamoto S."/>
            <person name="Koyama A."/>
        </authorList>
    </citation>
    <scope>NUCLEOTIDE SEQUENCE [LARGE SCALE GENOMIC DNA]</scope>
    <source>
        <strain>BCG / Tokyo 172 / ATCC 35737 / TMC 1019</strain>
    </source>
</reference>
<organism>
    <name type="scientific">Mycobacterium bovis (strain BCG / Tokyo 172 / ATCC 35737 / TMC 1019)</name>
    <dbReference type="NCBI Taxonomy" id="561275"/>
    <lineage>
        <taxon>Bacteria</taxon>
        <taxon>Bacillati</taxon>
        <taxon>Actinomycetota</taxon>
        <taxon>Actinomycetes</taxon>
        <taxon>Mycobacteriales</taxon>
        <taxon>Mycobacteriaceae</taxon>
        <taxon>Mycobacterium</taxon>
        <taxon>Mycobacterium tuberculosis complex</taxon>
    </lineage>
</organism>
<keyword id="KW-0131">Cell cycle</keyword>
<keyword id="KW-0132">Cell division</keyword>
<keyword id="KW-0133">Cell shape</keyword>
<keyword id="KW-0961">Cell wall biogenesis/degradation</keyword>
<keyword id="KW-0963">Cytoplasm</keyword>
<keyword id="KW-0274">FAD</keyword>
<keyword id="KW-0285">Flavoprotein</keyword>
<keyword id="KW-0521">NADP</keyword>
<keyword id="KW-0560">Oxidoreductase</keyword>
<keyword id="KW-0573">Peptidoglycan synthesis</keyword>
<proteinExistence type="inferred from homology"/>
<feature type="chain" id="PRO_1000191433" description="UDP-N-acetylenolpyruvoylglucosamine reductase">
    <location>
        <begin position="1"/>
        <end position="369"/>
    </location>
</feature>
<feature type="domain" description="FAD-binding PCMH-type" evidence="1">
    <location>
        <begin position="29"/>
        <end position="202"/>
    </location>
</feature>
<feature type="active site" evidence="1">
    <location>
        <position position="176"/>
    </location>
</feature>
<feature type="active site" description="Proton donor" evidence="1">
    <location>
        <position position="257"/>
    </location>
</feature>
<feature type="active site" evidence="1">
    <location>
        <position position="361"/>
    </location>
</feature>
<gene>
    <name evidence="1" type="primary">murB</name>
    <name type="ordered locus">JTY_0493</name>
</gene>
<dbReference type="EC" id="1.3.1.98" evidence="1"/>
<dbReference type="EMBL" id="AP010918">
    <property type="protein sequence ID" value="BAH24789.1"/>
    <property type="molecule type" value="Genomic_DNA"/>
</dbReference>
<dbReference type="RefSeq" id="WP_003402354.1">
    <property type="nucleotide sequence ID" value="NZ_CP014566.1"/>
</dbReference>
<dbReference type="SMR" id="C1AKG0"/>
<dbReference type="KEGG" id="mbt:JTY_0493"/>
<dbReference type="HOGENOM" id="CLU_035304_0_1_11"/>
<dbReference type="UniPathway" id="UPA00219"/>
<dbReference type="GO" id="GO:0005829">
    <property type="term" value="C:cytosol"/>
    <property type="evidence" value="ECO:0007669"/>
    <property type="project" value="TreeGrafter"/>
</dbReference>
<dbReference type="GO" id="GO:0071949">
    <property type="term" value="F:FAD binding"/>
    <property type="evidence" value="ECO:0007669"/>
    <property type="project" value="InterPro"/>
</dbReference>
<dbReference type="GO" id="GO:0008762">
    <property type="term" value="F:UDP-N-acetylmuramate dehydrogenase activity"/>
    <property type="evidence" value="ECO:0007669"/>
    <property type="project" value="UniProtKB-UniRule"/>
</dbReference>
<dbReference type="GO" id="GO:0051301">
    <property type="term" value="P:cell division"/>
    <property type="evidence" value="ECO:0007669"/>
    <property type="project" value="UniProtKB-KW"/>
</dbReference>
<dbReference type="GO" id="GO:0071555">
    <property type="term" value="P:cell wall organization"/>
    <property type="evidence" value="ECO:0007669"/>
    <property type="project" value="UniProtKB-KW"/>
</dbReference>
<dbReference type="GO" id="GO:0009252">
    <property type="term" value="P:peptidoglycan biosynthetic process"/>
    <property type="evidence" value="ECO:0007669"/>
    <property type="project" value="UniProtKB-UniRule"/>
</dbReference>
<dbReference type="GO" id="GO:0008360">
    <property type="term" value="P:regulation of cell shape"/>
    <property type="evidence" value="ECO:0007669"/>
    <property type="project" value="UniProtKB-KW"/>
</dbReference>
<dbReference type="Gene3D" id="3.30.465.10">
    <property type="match status" value="1"/>
</dbReference>
<dbReference type="Gene3D" id="3.90.78.10">
    <property type="entry name" value="UDP-N-acetylenolpyruvoylglucosamine reductase, C-terminal domain"/>
    <property type="match status" value="1"/>
</dbReference>
<dbReference type="Gene3D" id="3.30.43.10">
    <property type="entry name" value="Uridine Diphospho-n-acetylenolpyruvylglucosamine Reductase, domain 2"/>
    <property type="match status" value="1"/>
</dbReference>
<dbReference type="HAMAP" id="MF_00037">
    <property type="entry name" value="MurB"/>
    <property type="match status" value="1"/>
</dbReference>
<dbReference type="InterPro" id="IPR016166">
    <property type="entry name" value="FAD-bd_PCMH"/>
</dbReference>
<dbReference type="InterPro" id="IPR036318">
    <property type="entry name" value="FAD-bd_PCMH-like_sf"/>
</dbReference>
<dbReference type="InterPro" id="IPR016167">
    <property type="entry name" value="FAD-bd_PCMH_sub1"/>
</dbReference>
<dbReference type="InterPro" id="IPR016169">
    <property type="entry name" value="FAD-bd_PCMH_sub2"/>
</dbReference>
<dbReference type="InterPro" id="IPR003170">
    <property type="entry name" value="MurB"/>
</dbReference>
<dbReference type="InterPro" id="IPR011601">
    <property type="entry name" value="MurB_C"/>
</dbReference>
<dbReference type="InterPro" id="IPR036635">
    <property type="entry name" value="MurB_C_sf"/>
</dbReference>
<dbReference type="InterPro" id="IPR006094">
    <property type="entry name" value="Oxid_FAD_bind_N"/>
</dbReference>
<dbReference type="NCBIfam" id="TIGR00179">
    <property type="entry name" value="murB"/>
    <property type="match status" value="1"/>
</dbReference>
<dbReference type="NCBIfam" id="NF010478">
    <property type="entry name" value="PRK13903.1"/>
    <property type="match status" value="1"/>
</dbReference>
<dbReference type="PANTHER" id="PTHR21071">
    <property type="entry name" value="UDP-N-ACETYLENOLPYRUVOYLGLUCOSAMINE REDUCTASE"/>
    <property type="match status" value="1"/>
</dbReference>
<dbReference type="PANTHER" id="PTHR21071:SF4">
    <property type="entry name" value="UDP-N-ACETYLENOLPYRUVOYLGLUCOSAMINE REDUCTASE"/>
    <property type="match status" value="1"/>
</dbReference>
<dbReference type="Pfam" id="PF01565">
    <property type="entry name" value="FAD_binding_4"/>
    <property type="match status" value="1"/>
</dbReference>
<dbReference type="Pfam" id="PF02873">
    <property type="entry name" value="MurB_C"/>
    <property type="match status" value="1"/>
</dbReference>
<dbReference type="SUPFAM" id="SSF56176">
    <property type="entry name" value="FAD-binding/transporter-associated domain-like"/>
    <property type="match status" value="1"/>
</dbReference>
<dbReference type="SUPFAM" id="SSF56194">
    <property type="entry name" value="Uridine diphospho-N-Acetylenolpyruvylglucosamine reductase, MurB, C-terminal domain"/>
    <property type="match status" value="1"/>
</dbReference>
<dbReference type="PROSITE" id="PS51387">
    <property type="entry name" value="FAD_PCMH"/>
    <property type="match status" value="1"/>
</dbReference>
<evidence type="ECO:0000255" key="1">
    <source>
        <dbReference type="HAMAP-Rule" id="MF_00037"/>
    </source>
</evidence>
<protein>
    <recommendedName>
        <fullName evidence="1">UDP-N-acetylenolpyruvoylglucosamine reductase</fullName>
        <ecNumber evidence="1">1.3.1.98</ecNumber>
    </recommendedName>
    <alternativeName>
        <fullName evidence="1">UDP-N-acetylmuramate dehydrogenase</fullName>
    </alternativeName>
</protein>